<keyword id="KW-0472">Membrane</keyword>
<keyword id="KW-0602">Photosynthesis</keyword>
<keyword id="KW-0604">Photosystem II</keyword>
<keyword id="KW-0793">Thylakoid</keyword>
<keyword id="KW-0812">Transmembrane</keyword>
<keyword id="KW-1133">Transmembrane helix</keyword>
<reference key="1">
    <citation type="journal article" date="2011" name="MBio">
        <title>Novel metabolic attributes of the genus Cyanothece, comprising a group of unicellular nitrogen-fixing Cyanobacteria.</title>
        <authorList>
            <person name="Bandyopadhyay A."/>
            <person name="Elvitigala T."/>
            <person name="Welsh E."/>
            <person name="Stockel J."/>
            <person name="Liberton M."/>
            <person name="Min H."/>
            <person name="Sherman L.A."/>
            <person name="Pakrasi H.B."/>
        </authorList>
    </citation>
    <scope>NUCLEOTIDE SEQUENCE [LARGE SCALE GENOMIC DNA]</scope>
    <source>
        <strain>PCC 7425 / ATCC 29141</strain>
    </source>
</reference>
<proteinExistence type="inferred from homology"/>
<organism>
    <name type="scientific">Cyanothece sp. (strain PCC 7425 / ATCC 29141)</name>
    <dbReference type="NCBI Taxonomy" id="395961"/>
    <lineage>
        <taxon>Bacteria</taxon>
        <taxon>Bacillati</taxon>
        <taxon>Cyanobacteriota</taxon>
        <taxon>Cyanophyceae</taxon>
        <taxon>Gomontiellales</taxon>
        <taxon>Cyanothecaceae</taxon>
        <taxon>Cyanothece</taxon>
    </lineage>
</organism>
<dbReference type="EMBL" id="CP001344">
    <property type="protein sequence ID" value="ACL43002.1"/>
    <property type="molecule type" value="Genomic_DNA"/>
</dbReference>
<dbReference type="SMR" id="B8HUV5"/>
<dbReference type="STRING" id="395961.Cyan7425_0613"/>
<dbReference type="KEGG" id="cyn:Cyan7425_0613"/>
<dbReference type="HOGENOM" id="CLU_218393_1_0_3"/>
<dbReference type="GO" id="GO:0009523">
    <property type="term" value="C:photosystem II"/>
    <property type="evidence" value="ECO:0007669"/>
    <property type="project" value="UniProtKB-KW"/>
</dbReference>
<dbReference type="GO" id="GO:0031676">
    <property type="term" value="C:plasma membrane-derived thylakoid membrane"/>
    <property type="evidence" value="ECO:0007669"/>
    <property type="project" value="UniProtKB-SubCell"/>
</dbReference>
<dbReference type="GO" id="GO:0030145">
    <property type="term" value="F:manganese ion binding"/>
    <property type="evidence" value="ECO:0007669"/>
    <property type="project" value="InterPro"/>
</dbReference>
<dbReference type="GO" id="GO:0015979">
    <property type="term" value="P:photosynthesis"/>
    <property type="evidence" value="ECO:0007669"/>
    <property type="project" value="UniProtKB-UniRule"/>
</dbReference>
<dbReference type="HAMAP" id="MF_00717">
    <property type="entry name" value="PSII_PsbY"/>
    <property type="match status" value="1"/>
</dbReference>
<dbReference type="InterPro" id="IPR009388">
    <property type="entry name" value="PSII_PsbY"/>
</dbReference>
<dbReference type="NCBIfam" id="NF009711">
    <property type="entry name" value="PRK13240.1"/>
    <property type="match status" value="1"/>
</dbReference>
<dbReference type="Pfam" id="PF06298">
    <property type="entry name" value="PsbY"/>
    <property type="match status" value="1"/>
</dbReference>
<comment type="function">
    <text evidence="1">Loosely associated component of the core of photosystem II (PSII), it is not always seen in crystals. PSII is a light-driven water plastoquinone oxidoreductase, using light energy to abstract electrons from H(2)O, generating a proton gradient subsequently used for ATP formation.</text>
</comment>
<comment type="subunit">
    <text evidence="1">PSII is composed of 1 copy each of membrane proteins PsbA, PsbB, PsbC, PsbD, PsbE, PsbF, PsbH, PsbI, PsbJ, PsbK, PsbL, PsbM, PsbT, PsbX, PsbY, PsbZ, Psb30/Ycf12, peripheral proteins PsbO, CyanoQ (PsbQ), PsbU, PsbV and a large number of cofactors. It forms dimeric complexes.</text>
</comment>
<comment type="subcellular location">
    <subcellularLocation>
        <location evidence="1">Cellular thylakoid membrane</location>
        <topology evidence="1">Single-pass membrane protein</topology>
    </subcellularLocation>
</comment>
<comment type="similarity">
    <text evidence="1">Belongs to the PsbY family.</text>
</comment>
<protein>
    <recommendedName>
        <fullName evidence="1">Photosystem II reaction center protein Y</fullName>
    </recommendedName>
</protein>
<feature type="chain" id="PRO_1000148013" description="Photosystem II reaction center protein Y">
    <location>
        <begin position="1"/>
        <end position="39"/>
    </location>
</feature>
<feature type="transmembrane region" description="Helical" evidence="1">
    <location>
        <begin position="7"/>
        <end position="25"/>
    </location>
</feature>
<sequence>MDLDFRVLVVLLPVLLAGGWALKNILPAALRQVQSFFSK</sequence>
<name>PSBY_CYAP4</name>
<accession>B8HUV5</accession>
<gene>
    <name evidence="1" type="primary">psbY</name>
    <name type="ordered locus">Cyan7425_0613</name>
</gene>
<evidence type="ECO:0000255" key="1">
    <source>
        <dbReference type="HAMAP-Rule" id="MF_00717"/>
    </source>
</evidence>